<reference key="1">
    <citation type="journal article" date="2009" name="PLoS Genet.">
        <title>Organised genome dynamics in the Escherichia coli species results in highly diverse adaptive paths.</title>
        <authorList>
            <person name="Touchon M."/>
            <person name="Hoede C."/>
            <person name="Tenaillon O."/>
            <person name="Barbe V."/>
            <person name="Baeriswyl S."/>
            <person name="Bidet P."/>
            <person name="Bingen E."/>
            <person name="Bonacorsi S."/>
            <person name="Bouchier C."/>
            <person name="Bouvet O."/>
            <person name="Calteau A."/>
            <person name="Chiapello H."/>
            <person name="Clermont O."/>
            <person name="Cruveiller S."/>
            <person name="Danchin A."/>
            <person name="Diard M."/>
            <person name="Dossat C."/>
            <person name="Karoui M.E."/>
            <person name="Frapy E."/>
            <person name="Garry L."/>
            <person name="Ghigo J.M."/>
            <person name="Gilles A.M."/>
            <person name="Johnson J."/>
            <person name="Le Bouguenec C."/>
            <person name="Lescat M."/>
            <person name="Mangenot S."/>
            <person name="Martinez-Jehanne V."/>
            <person name="Matic I."/>
            <person name="Nassif X."/>
            <person name="Oztas S."/>
            <person name="Petit M.A."/>
            <person name="Pichon C."/>
            <person name="Rouy Z."/>
            <person name="Ruf C.S."/>
            <person name="Schneider D."/>
            <person name="Tourret J."/>
            <person name="Vacherie B."/>
            <person name="Vallenet D."/>
            <person name="Medigue C."/>
            <person name="Rocha E.P.C."/>
            <person name="Denamur E."/>
        </authorList>
    </citation>
    <scope>NUCLEOTIDE SEQUENCE [LARGE SCALE GENOMIC DNA]</scope>
    <source>
        <strain>ED1a</strain>
    </source>
</reference>
<dbReference type="EC" id="4.2.1.20" evidence="1"/>
<dbReference type="EMBL" id="CU928162">
    <property type="protein sequence ID" value="CAR07666.2"/>
    <property type="molecule type" value="Genomic_DNA"/>
</dbReference>
<dbReference type="RefSeq" id="WP_000209513.1">
    <property type="nucleotide sequence ID" value="NC_011745.1"/>
</dbReference>
<dbReference type="SMR" id="B7MUA0"/>
<dbReference type="GeneID" id="75171375"/>
<dbReference type="KEGG" id="ecq:ECED1_1468"/>
<dbReference type="HOGENOM" id="CLU_016734_3_1_6"/>
<dbReference type="UniPathway" id="UPA00035">
    <property type="reaction ID" value="UER00044"/>
</dbReference>
<dbReference type="Proteomes" id="UP000000748">
    <property type="component" value="Chromosome"/>
</dbReference>
<dbReference type="GO" id="GO:0005737">
    <property type="term" value="C:cytoplasm"/>
    <property type="evidence" value="ECO:0007669"/>
    <property type="project" value="TreeGrafter"/>
</dbReference>
<dbReference type="GO" id="GO:0004834">
    <property type="term" value="F:tryptophan synthase activity"/>
    <property type="evidence" value="ECO:0007669"/>
    <property type="project" value="UniProtKB-UniRule"/>
</dbReference>
<dbReference type="CDD" id="cd06446">
    <property type="entry name" value="Trp-synth_B"/>
    <property type="match status" value="1"/>
</dbReference>
<dbReference type="FunFam" id="3.40.50.1100:FF:000001">
    <property type="entry name" value="Tryptophan synthase beta chain"/>
    <property type="match status" value="1"/>
</dbReference>
<dbReference type="FunFam" id="3.40.50.1100:FF:000004">
    <property type="entry name" value="Tryptophan synthase beta chain"/>
    <property type="match status" value="1"/>
</dbReference>
<dbReference type="Gene3D" id="3.40.50.1100">
    <property type="match status" value="2"/>
</dbReference>
<dbReference type="HAMAP" id="MF_00133">
    <property type="entry name" value="Trp_synth_beta"/>
    <property type="match status" value="1"/>
</dbReference>
<dbReference type="InterPro" id="IPR006653">
    <property type="entry name" value="Trp_synth_b_CS"/>
</dbReference>
<dbReference type="InterPro" id="IPR006654">
    <property type="entry name" value="Trp_synth_beta"/>
</dbReference>
<dbReference type="InterPro" id="IPR023026">
    <property type="entry name" value="Trp_synth_beta/beta-like"/>
</dbReference>
<dbReference type="InterPro" id="IPR001926">
    <property type="entry name" value="TrpB-like_PALP"/>
</dbReference>
<dbReference type="InterPro" id="IPR036052">
    <property type="entry name" value="TrpB-like_PALP_sf"/>
</dbReference>
<dbReference type="NCBIfam" id="TIGR00263">
    <property type="entry name" value="trpB"/>
    <property type="match status" value="1"/>
</dbReference>
<dbReference type="PANTHER" id="PTHR48077:SF3">
    <property type="entry name" value="TRYPTOPHAN SYNTHASE"/>
    <property type="match status" value="1"/>
</dbReference>
<dbReference type="PANTHER" id="PTHR48077">
    <property type="entry name" value="TRYPTOPHAN SYNTHASE-RELATED"/>
    <property type="match status" value="1"/>
</dbReference>
<dbReference type="Pfam" id="PF00291">
    <property type="entry name" value="PALP"/>
    <property type="match status" value="1"/>
</dbReference>
<dbReference type="PIRSF" id="PIRSF001413">
    <property type="entry name" value="Trp_syn_beta"/>
    <property type="match status" value="1"/>
</dbReference>
<dbReference type="SUPFAM" id="SSF53686">
    <property type="entry name" value="Tryptophan synthase beta subunit-like PLP-dependent enzymes"/>
    <property type="match status" value="1"/>
</dbReference>
<dbReference type="PROSITE" id="PS00168">
    <property type="entry name" value="TRP_SYNTHASE_BETA"/>
    <property type="match status" value="1"/>
</dbReference>
<organism>
    <name type="scientific">Escherichia coli O81 (strain ED1a)</name>
    <dbReference type="NCBI Taxonomy" id="585397"/>
    <lineage>
        <taxon>Bacteria</taxon>
        <taxon>Pseudomonadati</taxon>
        <taxon>Pseudomonadota</taxon>
        <taxon>Gammaproteobacteria</taxon>
        <taxon>Enterobacterales</taxon>
        <taxon>Enterobacteriaceae</taxon>
        <taxon>Escherichia</taxon>
    </lineage>
</organism>
<protein>
    <recommendedName>
        <fullName evidence="1">Tryptophan synthase beta chain</fullName>
        <ecNumber evidence="1">4.2.1.20</ecNumber>
    </recommendedName>
</protein>
<evidence type="ECO:0000255" key="1">
    <source>
        <dbReference type="HAMAP-Rule" id="MF_00133"/>
    </source>
</evidence>
<proteinExistence type="inferred from homology"/>
<feature type="chain" id="PRO_1000198745" description="Tryptophan synthase beta chain">
    <location>
        <begin position="1"/>
        <end position="397"/>
    </location>
</feature>
<feature type="modified residue" description="N6-(pyridoxal phosphate)lysine" evidence="1">
    <location>
        <position position="87"/>
    </location>
</feature>
<keyword id="KW-0028">Amino-acid biosynthesis</keyword>
<keyword id="KW-0057">Aromatic amino acid biosynthesis</keyword>
<keyword id="KW-0456">Lyase</keyword>
<keyword id="KW-0663">Pyridoxal phosphate</keyword>
<keyword id="KW-0822">Tryptophan biosynthesis</keyword>
<gene>
    <name evidence="1" type="primary">trpB</name>
    <name type="ordered locus">ECED1_1468</name>
</gene>
<accession>B7MUA0</accession>
<name>TRPB_ECO81</name>
<comment type="function">
    <text evidence="1">The beta subunit is responsible for the synthesis of L-tryptophan from indole and L-serine.</text>
</comment>
<comment type="catalytic activity">
    <reaction evidence="1">
        <text>(1S,2R)-1-C-(indol-3-yl)glycerol 3-phosphate + L-serine = D-glyceraldehyde 3-phosphate + L-tryptophan + H2O</text>
        <dbReference type="Rhea" id="RHEA:10532"/>
        <dbReference type="ChEBI" id="CHEBI:15377"/>
        <dbReference type="ChEBI" id="CHEBI:33384"/>
        <dbReference type="ChEBI" id="CHEBI:57912"/>
        <dbReference type="ChEBI" id="CHEBI:58866"/>
        <dbReference type="ChEBI" id="CHEBI:59776"/>
        <dbReference type="EC" id="4.2.1.20"/>
    </reaction>
</comment>
<comment type="cofactor">
    <cofactor evidence="1">
        <name>pyridoxal 5'-phosphate</name>
        <dbReference type="ChEBI" id="CHEBI:597326"/>
    </cofactor>
</comment>
<comment type="pathway">
    <text evidence="1">Amino-acid biosynthesis; L-tryptophan biosynthesis; L-tryptophan from chorismate: step 5/5.</text>
</comment>
<comment type="subunit">
    <text evidence="1">Tetramer of two alpha and two beta chains.</text>
</comment>
<comment type="similarity">
    <text evidence="1">Belongs to the TrpB family.</text>
</comment>
<sequence>MTTLLNPYFGEFGGMYVPQILMPALRQLEEAFVSAQKDPEFQAQFNDLLKNYAGRPTALTKCQNITAGTNTTLYLKREDLLHGGAHKTNQVLGQALLAKRMGKTEIIAETGAGQHGVASALASALLGLKCRIYMGAKDVERQSPNVFRMRLMGAEVIPVHSGSATLKDACNEALRDWSGSYETAHYMLGTAAGPHPYPTIVREFQRMIGEETKAQILEREGRLPDAVIACVGGGSNAIGMFADFINETDVGLIGVEPGGHGIETGEHGAPLKHGRVGIYFGMKAPMMQTEDGQIEESYSISAGLDFPSVGPQHAYLNSTGRADYVSITDDEALEAFKTLCLHEGIIPALESSHALAHALKMMRENPEKEQLLVVNLSGRGDKDIFTVHDILKARGEI</sequence>